<reference key="1">
    <citation type="submission" date="2006-06" db="EMBL/GenBank/DDBJ databases">
        <title>Complete sequence of Pseudoalteromonas atlantica T6c.</title>
        <authorList>
            <consortium name="US DOE Joint Genome Institute"/>
            <person name="Copeland A."/>
            <person name="Lucas S."/>
            <person name="Lapidus A."/>
            <person name="Barry K."/>
            <person name="Detter J.C."/>
            <person name="Glavina del Rio T."/>
            <person name="Hammon N."/>
            <person name="Israni S."/>
            <person name="Dalin E."/>
            <person name="Tice H."/>
            <person name="Pitluck S."/>
            <person name="Saunders E."/>
            <person name="Brettin T."/>
            <person name="Bruce D."/>
            <person name="Han C."/>
            <person name="Tapia R."/>
            <person name="Gilna P."/>
            <person name="Schmutz J."/>
            <person name="Larimer F."/>
            <person name="Land M."/>
            <person name="Hauser L."/>
            <person name="Kyrpides N."/>
            <person name="Kim E."/>
            <person name="Karls A.C."/>
            <person name="Bartlett D."/>
            <person name="Higgins B.P."/>
            <person name="Richardson P."/>
        </authorList>
    </citation>
    <scope>NUCLEOTIDE SEQUENCE [LARGE SCALE GENOMIC DNA]</scope>
    <source>
        <strain>T6c / ATCC BAA-1087</strain>
    </source>
</reference>
<gene>
    <name type="ordered locus">Patl_2273</name>
</gene>
<accession>Q15TJ8</accession>
<evidence type="ECO:0000255" key="1">
    <source>
        <dbReference type="HAMAP-Rule" id="MF_00657"/>
    </source>
</evidence>
<comment type="cofactor">
    <cofactor evidence="1">
        <name>Fe(2+)</name>
        <dbReference type="ChEBI" id="CHEBI:29033"/>
    </cofactor>
    <text evidence="1">Binds 1 Fe(2+) ion per subunit.</text>
</comment>
<comment type="cofactor">
    <cofactor evidence="1">
        <name>L-ascorbate</name>
        <dbReference type="ChEBI" id="CHEBI:38290"/>
    </cofactor>
</comment>
<dbReference type="EC" id="1.14.11.-" evidence="1"/>
<dbReference type="EMBL" id="CP000388">
    <property type="protein sequence ID" value="ABG40790.1"/>
    <property type="molecule type" value="Genomic_DNA"/>
</dbReference>
<dbReference type="RefSeq" id="WP_011575071.1">
    <property type="nucleotide sequence ID" value="NC_008228.1"/>
</dbReference>
<dbReference type="SMR" id="Q15TJ8"/>
<dbReference type="STRING" id="342610.Patl_2273"/>
<dbReference type="KEGG" id="pat:Patl_2273"/>
<dbReference type="eggNOG" id="COG3128">
    <property type="taxonomic scope" value="Bacteria"/>
</dbReference>
<dbReference type="HOGENOM" id="CLU_106663_0_0_6"/>
<dbReference type="OrthoDB" id="9812472at2"/>
<dbReference type="Proteomes" id="UP000001981">
    <property type="component" value="Chromosome"/>
</dbReference>
<dbReference type="GO" id="GO:0016706">
    <property type="term" value="F:2-oxoglutarate-dependent dioxygenase activity"/>
    <property type="evidence" value="ECO:0007669"/>
    <property type="project" value="UniProtKB-UniRule"/>
</dbReference>
<dbReference type="GO" id="GO:0005506">
    <property type="term" value="F:iron ion binding"/>
    <property type="evidence" value="ECO:0007669"/>
    <property type="project" value="UniProtKB-UniRule"/>
</dbReference>
<dbReference type="GO" id="GO:0031418">
    <property type="term" value="F:L-ascorbic acid binding"/>
    <property type="evidence" value="ECO:0007669"/>
    <property type="project" value="UniProtKB-KW"/>
</dbReference>
<dbReference type="GO" id="GO:0006974">
    <property type="term" value="P:DNA damage response"/>
    <property type="evidence" value="ECO:0007669"/>
    <property type="project" value="TreeGrafter"/>
</dbReference>
<dbReference type="GO" id="GO:0006879">
    <property type="term" value="P:intracellular iron ion homeostasis"/>
    <property type="evidence" value="ECO:0007669"/>
    <property type="project" value="TreeGrafter"/>
</dbReference>
<dbReference type="Gene3D" id="2.60.120.620">
    <property type="entry name" value="q2cbj1_9rhob like domain"/>
    <property type="match status" value="1"/>
</dbReference>
<dbReference type="Gene3D" id="4.10.860.20">
    <property type="entry name" value="Rabenosyn, Rab binding domain"/>
    <property type="match status" value="1"/>
</dbReference>
<dbReference type="HAMAP" id="MF_00657">
    <property type="entry name" value="Hydroxyl_YbiX"/>
    <property type="match status" value="1"/>
</dbReference>
<dbReference type="InterPro" id="IPR005123">
    <property type="entry name" value="Oxoglu/Fe-dep_dioxygenase_dom"/>
</dbReference>
<dbReference type="InterPro" id="IPR041097">
    <property type="entry name" value="PKHD_C"/>
</dbReference>
<dbReference type="InterPro" id="IPR023550">
    <property type="entry name" value="PKHD_hydroxylase"/>
</dbReference>
<dbReference type="InterPro" id="IPR006620">
    <property type="entry name" value="Pro_4_hyd_alph"/>
</dbReference>
<dbReference type="InterPro" id="IPR044862">
    <property type="entry name" value="Pro_4_hyd_alph_FE2OG_OXY"/>
</dbReference>
<dbReference type="NCBIfam" id="NF003974">
    <property type="entry name" value="PRK05467.1-3"/>
    <property type="match status" value="1"/>
</dbReference>
<dbReference type="NCBIfam" id="NF003975">
    <property type="entry name" value="PRK05467.1-4"/>
    <property type="match status" value="1"/>
</dbReference>
<dbReference type="PANTHER" id="PTHR41536">
    <property type="entry name" value="PKHD-TYPE HYDROXYLASE YBIX"/>
    <property type="match status" value="1"/>
</dbReference>
<dbReference type="PANTHER" id="PTHR41536:SF1">
    <property type="entry name" value="PKHD-TYPE HYDROXYLASE YBIX"/>
    <property type="match status" value="1"/>
</dbReference>
<dbReference type="Pfam" id="PF13640">
    <property type="entry name" value="2OG-FeII_Oxy_3"/>
    <property type="match status" value="1"/>
</dbReference>
<dbReference type="Pfam" id="PF18331">
    <property type="entry name" value="PKHD_C"/>
    <property type="match status" value="1"/>
</dbReference>
<dbReference type="SMART" id="SM00702">
    <property type="entry name" value="P4Hc"/>
    <property type="match status" value="1"/>
</dbReference>
<dbReference type="SUPFAM" id="SSF51197">
    <property type="entry name" value="Clavaminate synthase-like"/>
    <property type="match status" value="1"/>
</dbReference>
<dbReference type="PROSITE" id="PS51471">
    <property type="entry name" value="FE2OG_OXY"/>
    <property type="match status" value="1"/>
</dbReference>
<protein>
    <recommendedName>
        <fullName evidence="1">PKHD-type hydroxylase Patl_2273</fullName>
        <ecNumber evidence="1">1.14.11.-</ecNumber>
    </recommendedName>
</protein>
<feature type="chain" id="PRO_1000061727" description="PKHD-type hydroxylase Patl_2273">
    <location>
        <begin position="1"/>
        <end position="227"/>
    </location>
</feature>
<feature type="domain" description="Fe2OG dioxygenase" evidence="1">
    <location>
        <begin position="78"/>
        <end position="178"/>
    </location>
</feature>
<feature type="binding site" evidence="1">
    <location>
        <position position="96"/>
    </location>
    <ligand>
        <name>Fe cation</name>
        <dbReference type="ChEBI" id="CHEBI:24875"/>
    </ligand>
</feature>
<feature type="binding site" evidence="1">
    <location>
        <position position="98"/>
    </location>
    <ligand>
        <name>Fe cation</name>
        <dbReference type="ChEBI" id="CHEBI:24875"/>
    </ligand>
</feature>
<feature type="binding site" evidence="1">
    <location>
        <position position="159"/>
    </location>
    <ligand>
        <name>Fe cation</name>
        <dbReference type="ChEBI" id="CHEBI:24875"/>
    </ligand>
</feature>
<feature type="binding site" evidence="1">
    <location>
        <position position="169"/>
    </location>
    <ligand>
        <name>2-oxoglutarate</name>
        <dbReference type="ChEBI" id="CHEBI:16810"/>
    </ligand>
</feature>
<name>Y2273_PSEA6</name>
<organism>
    <name type="scientific">Pseudoalteromonas atlantica (strain T6c / ATCC BAA-1087)</name>
    <dbReference type="NCBI Taxonomy" id="3042615"/>
    <lineage>
        <taxon>Bacteria</taxon>
        <taxon>Pseudomonadati</taxon>
        <taxon>Pseudomonadota</taxon>
        <taxon>Gammaproteobacteria</taxon>
        <taxon>Alteromonadales</taxon>
        <taxon>Alteromonadaceae</taxon>
        <taxon>Paraglaciecola</taxon>
    </lineage>
</organism>
<sequence length="227" mass="25333">MLTVIEDLLSKKEVTQFTQALDKGQWLDGKHTAGSQASKVKYNQQLDDGSALAIELRNTVIRKLSGNALFMSSALPNKIYPPKFNRYQGGEHYGLHVDASVMPIPNSHQMLRTDLSATLFLSEPKTYDGGELSIETQFGLQQIKLNAGSVILYPANSLHQVNPVTKGRRTASFFWIESLVRSNDQRSMLFDLDQSIQALTVELGSNDAEVKRLTGVYHNLMRSWATC</sequence>
<proteinExistence type="inferred from homology"/>
<keyword id="KW-0223">Dioxygenase</keyword>
<keyword id="KW-0408">Iron</keyword>
<keyword id="KW-0479">Metal-binding</keyword>
<keyword id="KW-0560">Oxidoreductase</keyword>
<keyword id="KW-0847">Vitamin C</keyword>